<protein>
    <recommendedName>
        <fullName>Autophagy-related protein 13</fullName>
    </recommendedName>
</protein>
<reference key="1">
    <citation type="journal article" date="2005" name="Science">
        <title>The transcriptional landscape of the mammalian genome.</title>
        <authorList>
            <person name="Carninci P."/>
            <person name="Kasukawa T."/>
            <person name="Katayama S."/>
            <person name="Gough J."/>
            <person name="Frith M.C."/>
            <person name="Maeda N."/>
            <person name="Oyama R."/>
            <person name="Ravasi T."/>
            <person name="Lenhard B."/>
            <person name="Wells C."/>
            <person name="Kodzius R."/>
            <person name="Shimokawa K."/>
            <person name="Bajic V.B."/>
            <person name="Brenner S.E."/>
            <person name="Batalov S."/>
            <person name="Forrest A.R."/>
            <person name="Zavolan M."/>
            <person name="Davis M.J."/>
            <person name="Wilming L.G."/>
            <person name="Aidinis V."/>
            <person name="Allen J.E."/>
            <person name="Ambesi-Impiombato A."/>
            <person name="Apweiler R."/>
            <person name="Aturaliya R.N."/>
            <person name="Bailey T.L."/>
            <person name="Bansal M."/>
            <person name="Baxter L."/>
            <person name="Beisel K.W."/>
            <person name="Bersano T."/>
            <person name="Bono H."/>
            <person name="Chalk A.M."/>
            <person name="Chiu K.P."/>
            <person name="Choudhary V."/>
            <person name="Christoffels A."/>
            <person name="Clutterbuck D.R."/>
            <person name="Crowe M.L."/>
            <person name="Dalla E."/>
            <person name="Dalrymple B.P."/>
            <person name="de Bono B."/>
            <person name="Della Gatta G."/>
            <person name="di Bernardo D."/>
            <person name="Down T."/>
            <person name="Engstrom P."/>
            <person name="Fagiolini M."/>
            <person name="Faulkner G."/>
            <person name="Fletcher C.F."/>
            <person name="Fukushima T."/>
            <person name="Furuno M."/>
            <person name="Futaki S."/>
            <person name="Gariboldi M."/>
            <person name="Georgii-Hemming P."/>
            <person name="Gingeras T.R."/>
            <person name="Gojobori T."/>
            <person name="Green R.E."/>
            <person name="Gustincich S."/>
            <person name="Harbers M."/>
            <person name="Hayashi Y."/>
            <person name="Hensch T.K."/>
            <person name="Hirokawa N."/>
            <person name="Hill D."/>
            <person name="Huminiecki L."/>
            <person name="Iacono M."/>
            <person name="Ikeo K."/>
            <person name="Iwama A."/>
            <person name="Ishikawa T."/>
            <person name="Jakt M."/>
            <person name="Kanapin A."/>
            <person name="Katoh M."/>
            <person name="Kawasawa Y."/>
            <person name="Kelso J."/>
            <person name="Kitamura H."/>
            <person name="Kitano H."/>
            <person name="Kollias G."/>
            <person name="Krishnan S.P."/>
            <person name="Kruger A."/>
            <person name="Kummerfeld S.K."/>
            <person name="Kurochkin I.V."/>
            <person name="Lareau L.F."/>
            <person name="Lazarevic D."/>
            <person name="Lipovich L."/>
            <person name="Liu J."/>
            <person name="Liuni S."/>
            <person name="McWilliam S."/>
            <person name="Madan Babu M."/>
            <person name="Madera M."/>
            <person name="Marchionni L."/>
            <person name="Matsuda H."/>
            <person name="Matsuzawa S."/>
            <person name="Miki H."/>
            <person name="Mignone F."/>
            <person name="Miyake S."/>
            <person name="Morris K."/>
            <person name="Mottagui-Tabar S."/>
            <person name="Mulder N."/>
            <person name="Nakano N."/>
            <person name="Nakauchi H."/>
            <person name="Ng P."/>
            <person name="Nilsson R."/>
            <person name="Nishiguchi S."/>
            <person name="Nishikawa S."/>
            <person name="Nori F."/>
            <person name="Ohara O."/>
            <person name="Okazaki Y."/>
            <person name="Orlando V."/>
            <person name="Pang K.C."/>
            <person name="Pavan W.J."/>
            <person name="Pavesi G."/>
            <person name="Pesole G."/>
            <person name="Petrovsky N."/>
            <person name="Piazza S."/>
            <person name="Reed J."/>
            <person name="Reid J.F."/>
            <person name="Ring B.Z."/>
            <person name="Ringwald M."/>
            <person name="Rost B."/>
            <person name="Ruan Y."/>
            <person name="Salzberg S.L."/>
            <person name="Sandelin A."/>
            <person name="Schneider C."/>
            <person name="Schoenbach C."/>
            <person name="Sekiguchi K."/>
            <person name="Semple C.A."/>
            <person name="Seno S."/>
            <person name="Sessa L."/>
            <person name="Sheng Y."/>
            <person name="Shibata Y."/>
            <person name="Shimada H."/>
            <person name="Shimada K."/>
            <person name="Silva D."/>
            <person name="Sinclair B."/>
            <person name="Sperling S."/>
            <person name="Stupka E."/>
            <person name="Sugiura K."/>
            <person name="Sultana R."/>
            <person name="Takenaka Y."/>
            <person name="Taki K."/>
            <person name="Tammoja K."/>
            <person name="Tan S.L."/>
            <person name="Tang S."/>
            <person name="Taylor M.S."/>
            <person name="Tegner J."/>
            <person name="Teichmann S.A."/>
            <person name="Ueda H.R."/>
            <person name="van Nimwegen E."/>
            <person name="Verardo R."/>
            <person name="Wei C.L."/>
            <person name="Yagi K."/>
            <person name="Yamanishi H."/>
            <person name="Zabarovsky E."/>
            <person name="Zhu S."/>
            <person name="Zimmer A."/>
            <person name="Hide W."/>
            <person name="Bult C."/>
            <person name="Grimmond S.M."/>
            <person name="Teasdale R.D."/>
            <person name="Liu E.T."/>
            <person name="Brusic V."/>
            <person name="Quackenbush J."/>
            <person name="Wahlestedt C."/>
            <person name="Mattick J.S."/>
            <person name="Hume D.A."/>
            <person name="Kai C."/>
            <person name="Sasaki D."/>
            <person name="Tomaru Y."/>
            <person name="Fukuda S."/>
            <person name="Kanamori-Katayama M."/>
            <person name="Suzuki M."/>
            <person name="Aoki J."/>
            <person name="Arakawa T."/>
            <person name="Iida J."/>
            <person name="Imamura K."/>
            <person name="Itoh M."/>
            <person name="Kato T."/>
            <person name="Kawaji H."/>
            <person name="Kawagashira N."/>
            <person name="Kawashima T."/>
            <person name="Kojima M."/>
            <person name="Kondo S."/>
            <person name="Konno H."/>
            <person name="Nakano K."/>
            <person name="Ninomiya N."/>
            <person name="Nishio T."/>
            <person name="Okada M."/>
            <person name="Plessy C."/>
            <person name="Shibata K."/>
            <person name="Shiraki T."/>
            <person name="Suzuki S."/>
            <person name="Tagami M."/>
            <person name="Waki K."/>
            <person name="Watahiki A."/>
            <person name="Okamura-Oho Y."/>
            <person name="Suzuki H."/>
            <person name="Kawai J."/>
            <person name="Hayashizaki Y."/>
        </authorList>
    </citation>
    <scope>NUCLEOTIDE SEQUENCE [LARGE SCALE MRNA] (ISOFORM 2)</scope>
    <source>
        <strain>C57BL/6J</strain>
        <strain>NOD</strain>
        <tissue>Bone marrow</tissue>
        <tissue>Dendritic cell</tissue>
    </source>
</reference>
<reference key="2">
    <citation type="journal article" date="2009" name="PLoS Biol.">
        <title>Lineage-specific biology revealed by a finished genome assembly of the mouse.</title>
        <authorList>
            <person name="Church D.M."/>
            <person name="Goodstadt L."/>
            <person name="Hillier L.W."/>
            <person name="Zody M.C."/>
            <person name="Goldstein S."/>
            <person name="She X."/>
            <person name="Bult C.J."/>
            <person name="Agarwala R."/>
            <person name="Cherry J.L."/>
            <person name="DiCuccio M."/>
            <person name="Hlavina W."/>
            <person name="Kapustin Y."/>
            <person name="Meric P."/>
            <person name="Maglott D."/>
            <person name="Birtle Z."/>
            <person name="Marques A.C."/>
            <person name="Graves T."/>
            <person name="Zhou S."/>
            <person name="Teague B."/>
            <person name="Potamousis K."/>
            <person name="Churas C."/>
            <person name="Place M."/>
            <person name="Herschleb J."/>
            <person name="Runnheim R."/>
            <person name="Forrest D."/>
            <person name="Amos-Landgraf J."/>
            <person name="Schwartz D.C."/>
            <person name="Cheng Z."/>
            <person name="Lindblad-Toh K."/>
            <person name="Eichler E.E."/>
            <person name="Ponting C.P."/>
        </authorList>
    </citation>
    <scope>NUCLEOTIDE SEQUENCE [LARGE SCALE GENOMIC DNA]</scope>
    <source>
        <strain>C57BL/6J</strain>
    </source>
</reference>
<reference key="3">
    <citation type="submission" date="2005-08" db="EMBL/GenBank/DDBJ databases">
        <authorList>
            <person name="Mural R.J."/>
            <person name="Adams M.D."/>
            <person name="Myers E.W."/>
            <person name="Smith H.O."/>
            <person name="Venter J.C."/>
        </authorList>
    </citation>
    <scope>NUCLEOTIDE SEQUENCE [LARGE SCALE GENOMIC DNA]</scope>
    <scope>ALTERNATIVE SPLICING</scope>
</reference>
<reference key="4">
    <citation type="journal article" date="2004" name="Genome Res.">
        <title>The status, quality, and expansion of the NIH full-length cDNA project: the Mammalian Gene Collection (MGC).</title>
        <authorList>
            <consortium name="The MGC Project Team"/>
        </authorList>
    </citation>
    <scope>NUCLEOTIDE SEQUENCE [LARGE SCALE MRNA] (ISOFORM 2)</scope>
    <source>
        <strain>129</strain>
        <strain>FVB/N</strain>
        <tissue>Eye</tissue>
        <tissue>Mammary tumor</tissue>
    </source>
</reference>
<reference key="5">
    <citation type="journal article" date="2003" name="DNA Res.">
        <title>Prediction of the coding sequences of mouse homologues of KIAA gene: II. The complete nucleotide sequences of 400 mouse KIAA-homologous cDNAs identified by screening of terminal sequences of cDNA clones randomly sampled from size-fractionated libraries.</title>
        <authorList>
            <person name="Okazaki N."/>
            <person name="Kikuno R."/>
            <person name="Ohara R."/>
            <person name="Inamoto S."/>
            <person name="Aizawa H."/>
            <person name="Yuasa S."/>
            <person name="Nakajima D."/>
            <person name="Nagase T."/>
            <person name="Ohara O."/>
            <person name="Koga H."/>
        </authorList>
    </citation>
    <scope>NUCLEOTIDE SEQUENCE [LARGE SCALE MRNA] OF 91-516 (ISOFORM 1)</scope>
    <source>
        <tissue>Brain</tissue>
    </source>
</reference>
<reference key="6">
    <citation type="journal article" date="2009" name="J. Biol. Chem.">
        <title>ULK1.ATG13.FIP200 complex mediates mTOR signaling and is essential for autophagy.</title>
        <authorList>
            <person name="Ganley I.G."/>
            <person name="Lam du H."/>
            <person name="Wang J."/>
            <person name="Ding X."/>
            <person name="Chen S."/>
            <person name="Jiang X."/>
        </authorList>
    </citation>
    <scope>FUNCTION</scope>
    <scope>INTERACTION WITH ULK1 AND RB1CC1</scope>
    <scope>PHOSPHORYLATION</scope>
    <scope>SUBCELLULAR LOCATION</scope>
</reference>
<reference key="7">
    <citation type="journal article" date="2009" name="Mol. Biol. Cell">
        <title>Nutrient-dependent mTORC1 association with the ULK1-Atg13-FIP200 complex required for autophagy.</title>
        <authorList>
            <person name="Hosokawa N."/>
            <person name="Hara T."/>
            <person name="Kaizuka T."/>
            <person name="Kishi C."/>
            <person name="Takamura A."/>
            <person name="Miura Y."/>
            <person name="Iemura S."/>
            <person name="Natsume T."/>
            <person name="Takehana K."/>
            <person name="Yamada N."/>
            <person name="Guan J.L."/>
            <person name="Oshiro N."/>
            <person name="Mizushima N."/>
        </authorList>
    </citation>
    <scope>SUBUNIT</scope>
    <scope>SUBCELLULAR LOCATION</scope>
</reference>
<keyword id="KW-0007">Acetylation</keyword>
<keyword id="KW-0025">Alternative splicing</keyword>
<keyword id="KW-0072">Autophagy</keyword>
<keyword id="KW-0963">Cytoplasm</keyword>
<keyword id="KW-0597">Phosphoprotein</keyword>
<keyword id="KW-1185">Reference proteome</keyword>
<gene>
    <name type="primary">Atg13</name>
    <name type="synonym">D2Ertd391e</name>
    <name type="synonym">Kiaa0652</name>
</gene>
<organism>
    <name type="scientific">Mus musculus</name>
    <name type="common">Mouse</name>
    <dbReference type="NCBI Taxonomy" id="10090"/>
    <lineage>
        <taxon>Eukaryota</taxon>
        <taxon>Metazoa</taxon>
        <taxon>Chordata</taxon>
        <taxon>Craniata</taxon>
        <taxon>Vertebrata</taxon>
        <taxon>Euteleostomi</taxon>
        <taxon>Mammalia</taxon>
        <taxon>Eutheria</taxon>
        <taxon>Euarchontoglires</taxon>
        <taxon>Glires</taxon>
        <taxon>Rodentia</taxon>
        <taxon>Myomorpha</taxon>
        <taxon>Muroidea</taxon>
        <taxon>Muridae</taxon>
        <taxon>Murinae</taxon>
        <taxon>Mus</taxon>
        <taxon>Mus</taxon>
    </lineage>
</organism>
<evidence type="ECO:0000250" key="1">
    <source>
        <dbReference type="UniProtKB" id="O75143"/>
    </source>
</evidence>
<evidence type="ECO:0000256" key="2">
    <source>
        <dbReference type="SAM" id="MobiDB-lite"/>
    </source>
</evidence>
<evidence type="ECO:0000269" key="3">
    <source>
    </source>
</evidence>
<evidence type="ECO:0000269" key="4">
    <source>
    </source>
</evidence>
<evidence type="ECO:0000303" key="5">
    <source>
    </source>
</evidence>
<evidence type="ECO:0000303" key="6">
    <source>
    </source>
</evidence>
<evidence type="ECO:0000305" key="7"/>
<feature type="chain" id="PRO_0000345151" description="Autophagy-related protein 13">
    <location>
        <begin position="1"/>
        <end position="516"/>
    </location>
</feature>
<feature type="region of interest" description="Important for interaction with ATG101" evidence="1">
    <location>
        <begin position="127"/>
        <end position="134"/>
    </location>
</feature>
<feature type="region of interest" description="Disordered" evidence="2">
    <location>
        <begin position="336"/>
        <end position="359"/>
    </location>
</feature>
<feature type="region of interest" description="Disordered" evidence="2">
    <location>
        <begin position="405"/>
        <end position="438"/>
    </location>
</feature>
<feature type="short sequence motif" description="LIR">
    <location>
        <begin position="443"/>
        <end position="446"/>
    </location>
</feature>
<feature type="compositionally biased region" description="Polar residues" evidence="2">
    <location>
        <begin position="341"/>
        <end position="357"/>
    </location>
</feature>
<feature type="modified residue" description="N-acetylmethionine" evidence="1">
    <location>
        <position position="1"/>
    </location>
</feature>
<feature type="modified residue" description="Phosphoserine; by ULK1" evidence="1">
    <location>
        <position position="354"/>
    </location>
</feature>
<feature type="modified residue" description="Phosphoserine" evidence="1">
    <location>
        <position position="355"/>
    </location>
</feature>
<feature type="modified residue" description="Phosphoserine" evidence="1">
    <location>
        <position position="360"/>
    </location>
</feature>
<feature type="splice variant" id="VSP_034922" description="In isoform 2." evidence="5 6">
    <location>
        <begin position="263"/>
        <end position="299"/>
    </location>
</feature>
<proteinExistence type="evidence at protein level"/>
<name>ATG13_MOUSE</name>
<accession>Q91YI1</accession>
<accession>A2AH18</accession>
<accession>Q80TU9</accession>
<comment type="function">
    <text evidence="4">Autophagy factor required for autophagosome formation and mitophagy. Target of the TOR kinase signaling pathway that regulates autophagy through the control of the phosphorylation status of ATG13 and ULK1, and the regulation of the ATG13-ULK1-RB1CC1 complex. Through its regulation of ULK1 activity, plays a role in the regulation of the kinase activity of mTORC1 and cell proliferation.</text>
</comment>
<comment type="subunit">
    <text evidence="1 3 4">Part of a complex consisting of ATG13, ULK1 and RB1CC1 (PubMed:19211835, PubMed:19258318). Interacts with ATG101 (By similarity). Interacts with ULK1 (via C-terminus); this interaction is increased in the absence of TMEM39A (By similarity). Interacts with ULK2 (via C-terminus) (By similarity). Interacts (via the LIR motif) with GABARAP, GABARAPL and GABARAPL2 (By similarity). Interacts (via the LIR motif) with MAP1LC3A, MAP1LC3B and MAP1LC3C (By similarity). Interacts with TAB2 and TAB3 (By similarity). Interacts with C9orf72 (By similarity). Interacts with RB1CC1; this interaction is increased in the absence of TMEM39A (By similarity).</text>
</comment>
<comment type="interaction">
    <interactant intactId="EBI-8391007">
        <id>Q91YI1</id>
    </interactant>
    <interactant intactId="EBI-2946739">
        <id>Q9BSB4</id>
        <label>ATG101</label>
    </interactant>
    <organismsDiffer>true</organismsDiffer>
    <experiments>2</experiments>
</comment>
<comment type="subcellular location">
    <subcellularLocation>
        <location evidence="3 4">Cytoplasm</location>
        <location evidence="3 4">Cytosol</location>
    </subcellularLocation>
    <subcellularLocation>
        <location evidence="3 4">Preautophagosomal structure</location>
    </subcellularLocation>
    <text evidence="3 4">Under starvation conditions, is localized to puncate structures primarily representing the isolation membrane that sequesters a portion of the cytoplasm resulting in the formation of an autophagosome.</text>
</comment>
<comment type="alternative products">
    <event type="alternative splicing"/>
    <isoform>
        <id>Q91YI1-1</id>
        <name>1</name>
        <sequence type="displayed"/>
    </isoform>
    <isoform>
        <id>Q91YI1-2</id>
        <name>2</name>
        <sequence type="described" ref="VSP_034922"/>
    </isoform>
</comment>
<comment type="domain">
    <text evidence="1">The LIR motif (LC3-interacting region) is required for the interaction with the ATG8 family proteins GABARAP, GABARAPL, GABARAPL2, and MAP1LC3A.</text>
</comment>
<comment type="PTM">
    <text evidence="1">Phosphorylated by ULK1, ULK2 and mTOR. Phosphorylation status depends on nutrient-rich conditions; dephosphorylated during starvation or following treatment with rapamycin. ULK1-mediated phosphorylation of ATG13 at Ser-354 is required for efficient clearance of depolarized mitochondria.</text>
</comment>
<comment type="similarity">
    <text evidence="7">Belongs to the ATG13 family. Metazoan subfamily.</text>
</comment>
<comment type="sequence caution" evidence="7">
    <conflict type="miscellaneous discrepancy">
        <sequence resource="EMBL-CDS" id="BAC65621"/>
    </conflict>
    <text>The sequence differs from that shown because it seems to be derived from a pre-mRNA.</text>
</comment>
<dbReference type="EMBL" id="AK149672">
    <property type="protein sequence ID" value="BAE29016.1"/>
    <property type="molecule type" value="mRNA"/>
</dbReference>
<dbReference type="EMBL" id="AK171206">
    <property type="protein sequence ID" value="BAE42312.1"/>
    <property type="molecule type" value="mRNA"/>
</dbReference>
<dbReference type="EMBL" id="AK171440">
    <property type="protein sequence ID" value="BAE42453.1"/>
    <property type="molecule type" value="mRNA"/>
</dbReference>
<dbReference type="EMBL" id="AL714023">
    <property type="status" value="NOT_ANNOTATED_CDS"/>
    <property type="molecule type" value="Genomic_DNA"/>
</dbReference>
<dbReference type="EMBL" id="CH466519">
    <property type="protein sequence ID" value="EDL27574.1"/>
    <property type="molecule type" value="Genomic_DNA"/>
</dbReference>
<dbReference type="EMBL" id="BC016669">
    <property type="protein sequence ID" value="AAH16669.1"/>
    <property type="molecule type" value="mRNA"/>
</dbReference>
<dbReference type="EMBL" id="BC023673">
    <property type="protein sequence ID" value="AAH23673.1"/>
    <property type="molecule type" value="mRNA"/>
</dbReference>
<dbReference type="EMBL" id="BC023712">
    <property type="protein sequence ID" value="AAH23712.1"/>
    <property type="molecule type" value="mRNA"/>
</dbReference>
<dbReference type="EMBL" id="BC033419">
    <property type="protein sequence ID" value="AAH33419.1"/>
    <property type="molecule type" value="mRNA"/>
</dbReference>
<dbReference type="EMBL" id="AK122339">
    <property type="protein sequence ID" value="BAC65621.3"/>
    <property type="status" value="ALT_SEQ"/>
    <property type="molecule type" value="Transcribed_RNA"/>
</dbReference>
<dbReference type="CCDS" id="CCDS16438.1">
    <molecule id="Q91YI1-2"/>
</dbReference>
<dbReference type="CCDS" id="CCDS89517.1">
    <molecule id="Q91YI1-1"/>
</dbReference>
<dbReference type="RefSeq" id="NP_001342348.1">
    <molecule id="Q91YI1-1"/>
    <property type="nucleotide sequence ID" value="NM_001355419.1"/>
</dbReference>
<dbReference type="RefSeq" id="NP_663503.1">
    <molecule id="Q91YI1-2"/>
    <property type="nucleotide sequence ID" value="NM_145528.3"/>
</dbReference>
<dbReference type="RefSeq" id="XP_006499953.1">
    <property type="nucleotide sequence ID" value="XM_006499890.3"/>
</dbReference>
<dbReference type="SMR" id="Q91YI1"/>
<dbReference type="BioGRID" id="206251">
    <property type="interactions" value="6"/>
</dbReference>
<dbReference type="ComplexPortal" id="CPX-380">
    <property type="entry name" value="ULK1-ATG13-RB1CC1-ATG101 autophagy initiation complex"/>
</dbReference>
<dbReference type="DIP" id="DIP-60542N"/>
<dbReference type="FunCoup" id="Q91YI1">
    <property type="interactions" value="2315"/>
</dbReference>
<dbReference type="IntAct" id="Q91YI1">
    <property type="interactions" value="4"/>
</dbReference>
<dbReference type="MINT" id="Q91YI1"/>
<dbReference type="STRING" id="10090.ENSMUSP00000076081"/>
<dbReference type="GlyGen" id="Q91YI1">
    <property type="glycosylation" value="1 site"/>
</dbReference>
<dbReference type="iPTMnet" id="Q91YI1"/>
<dbReference type="PhosphoSitePlus" id="Q91YI1"/>
<dbReference type="PaxDb" id="10090-ENSMUSP00000076081"/>
<dbReference type="PeptideAtlas" id="Q91YI1"/>
<dbReference type="ProteomicsDB" id="265161">
    <molecule id="Q91YI1-1"/>
</dbReference>
<dbReference type="ProteomicsDB" id="265162">
    <molecule id="Q91YI1-2"/>
</dbReference>
<dbReference type="Pumba" id="Q91YI1"/>
<dbReference type="Antibodypedia" id="26361">
    <property type="antibodies" value="602 antibodies from 38 providers"/>
</dbReference>
<dbReference type="DNASU" id="51897"/>
<dbReference type="Ensembl" id="ENSMUST00000028678.9">
    <molecule id="Q91YI1-1"/>
    <property type="protein sequence ID" value="ENSMUSP00000028678.9"/>
    <property type="gene ID" value="ENSMUSG00000027244.15"/>
</dbReference>
<dbReference type="Ensembl" id="ENSMUST00000076803.12">
    <molecule id="Q91YI1-2"/>
    <property type="protein sequence ID" value="ENSMUSP00000076081.6"/>
    <property type="gene ID" value="ENSMUSG00000027244.15"/>
</dbReference>
<dbReference type="GeneID" id="51897"/>
<dbReference type="KEGG" id="mmu:51897"/>
<dbReference type="UCSC" id="uc008kwn.2">
    <molecule id="Q91YI1-2"/>
    <property type="organism name" value="mouse"/>
</dbReference>
<dbReference type="AGR" id="MGI:1196429"/>
<dbReference type="CTD" id="9776"/>
<dbReference type="MGI" id="MGI:1196429">
    <property type="gene designation" value="Atg13"/>
</dbReference>
<dbReference type="VEuPathDB" id="HostDB:ENSMUSG00000027244"/>
<dbReference type="eggNOG" id="KOG3874">
    <property type="taxonomic scope" value="Eukaryota"/>
</dbReference>
<dbReference type="GeneTree" id="ENSGT00390000007055"/>
<dbReference type="HOGENOM" id="CLU_036365_0_0_1"/>
<dbReference type="InParanoid" id="Q91YI1"/>
<dbReference type="OMA" id="ETWYISL"/>
<dbReference type="OrthoDB" id="70161at2759"/>
<dbReference type="PhylomeDB" id="Q91YI1"/>
<dbReference type="TreeFam" id="TF321599"/>
<dbReference type="Reactome" id="R-MMU-1632852">
    <property type="pathway name" value="Macroautophagy"/>
</dbReference>
<dbReference type="BioGRID-ORCS" id="51897">
    <property type="hits" value="13 hits in 81 CRISPR screens"/>
</dbReference>
<dbReference type="ChiTaRS" id="Atg13">
    <property type="organism name" value="mouse"/>
</dbReference>
<dbReference type="PRO" id="PR:Q91YI1"/>
<dbReference type="Proteomes" id="UP000000589">
    <property type="component" value="Chromosome 2"/>
</dbReference>
<dbReference type="RNAct" id="Q91YI1">
    <property type="molecule type" value="protein"/>
</dbReference>
<dbReference type="Bgee" id="ENSMUSG00000027244">
    <property type="expression patterns" value="Expressed in retinal neural layer and 242 other cell types or tissues"/>
</dbReference>
<dbReference type="GO" id="GO:1990316">
    <property type="term" value="C:Atg1/ULK1 kinase complex"/>
    <property type="evidence" value="ECO:0000314"/>
    <property type="project" value="MGI"/>
</dbReference>
<dbReference type="GO" id="GO:0005829">
    <property type="term" value="C:cytosol"/>
    <property type="evidence" value="ECO:0000314"/>
    <property type="project" value="UniProtKB"/>
</dbReference>
<dbReference type="GO" id="GO:0005739">
    <property type="term" value="C:mitochondrion"/>
    <property type="evidence" value="ECO:0007669"/>
    <property type="project" value="Ensembl"/>
</dbReference>
<dbReference type="GO" id="GO:0000407">
    <property type="term" value="C:phagophore assembly site"/>
    <property type="evidence" value="ECO:0000314"/>
    <property type="project" value="UniProtKB"/>
</dbReference>
<dbReference type="GO" id="GO:0034045">
    <property type="term" value="C:phagophore assembly site membrane"/>
    <property type="evidence" value="ECO:0007669"/>
    <property type="project" value="Ensembl"/>
</dbReference>
<dbReference type="GO" id="GO:0019901">
    <property type="term" value="F:protein kinase binding"/>
    <property type="evidence" value="ECO:0007669"/>
    <property type="project" value="Ensembl"/>
</dbReference>
<dbReference type="GO" id="GO:0043539">
    <property type="term" value="F:protein serine/threonine kinase activator activity"/>
    <property type="evidence" value="ECO:0007669"/>
    <property type="project" value="Ensembl"/>
</dbReference>
<dbReference type="GO" id="GO:0000045">
    <property type="term" value="P:autophagosome assembly"/>
    <property type="evidence" value="ECO:0000314"/>
    <property type="project" value="ComplexPortal"/>
</dbReference>
<dbReference type="GO" id="GO:0000423">
    <property type="term" value="P:mitophagy"/>
    <property type="evidence" value="ECO:0000315"/>
    <property type="project" value="ParkinsonsUK-UCL"/>
</dbReference>
<dbReference type="GO" id="GO:0008285">
    <property type="term" value="P:negative regulation of cell population proliferation"/>
    <property type="evidence" value="ECO:0000314"/>
    <property type="project" value="ComplexPortal"/>
</dbReference>
<dbReference type="GO" id="GO:0010508">
    <property type="term" value="P:positive regulation of autophagy"/>
    <property type="evidence" value="ECO:0000314"/>
    <property type="project" value="ComplexPortal"/>
</dbReference>
<dbReference type="GO" id="GO:0098780">
    <property type="term" value="P:response to mitochondrial depolarisation"/>
    <property type="evidence" value="ECO:0000315"/>
    <property type="project" value="BHF-UCL"/>
</dbReference>
<dbReference type="FunFam" id="3.30.900.10:FF:000001">
    <property type="entry name" value="Autophagy-related protein 13"/>
    <property type="match status" value="1"/>
</dbReference>
<dbReference type="Gene3D" id="3.30.900.10">
    <property type="entry name" value="HORMA domain"/>
    <property type="match status" value="1"/>
</dbReference>
<dbReference type="InterPro" id="IPR040182">
    <property type="entry name" value="ATG13"/>
</dbReference>
<dbReference type="InterPro" id="IPR018731">
    <property type="entry name" value="Atg13_N"/>
</dbReference>
<dbReference type="InterPro" id="IPR036570">
    <property type="entry name" value="HORMA_dom_sf"/>
</dbReference>
<dbReference type="PANTHER" id="PTHR13430">
    <property type="match status" value="1"/>
</dbReference>
<dbReference type="PANTHER" id="PTHR13430:SF4">
    <property type="entry name" value="AUTOPHAGY-RELATED PROTEIN 13"/>
    <property type="match status" value="1"/>
</dbReference>
<dbReference type="Pfam" id="PF10033">
    <property type="entry name" value="ATG13"/>
    <property type="match status" value="1"/>
</dbReference>
<sequence length="516" mass="56441">METELSSQDRKDLDKFIKFFALKTVQVIVQARLGEKICTRSSSSPTGSDWFNLAIKDIPEVTHEAKKALSGQLPAVGRSMCVEISLKTSEGDSMELEIWCLEMNEKCDKEIKVSYTVYNRLSLLLKSLLAITRVTPAYRLSRKQGHEYVILYRIYFGEVQLNGLGEGFQTVRVGTVGTPVGTLTLSCAYRINLAFMSTRQFERTPPIMGIIIDHFVDRPYPSSSPMHPCNYRTAEDAGVAYPSVEDSQEVCTTSFSTSPPSQLSSSRLSYQPAVLGLGSADLAYPVVFTAGLNTTHAHQLMVPGKEGGVTLAPSHPTHGAQADPERLVMHMPSDGTHCAATPSSSEDTETVSNSSEGRASPHDILETIFVRKVGAFVNKPINQVTVTSLDIPFAMFAPKNLELEDADPMVNPPESPETTSPLHGSLHSDGSSGGSGGSTHDDFVMIDFKPAFSKDDILPMDLGTFYREFQNPPQLSSLSIDFGAQSMAEDLDSLPEKLAVHEKNVREFDAFVETLQ</sequence>